<gene>
    <name type="ordered locus">PA1618</name>
</gene>
<organism>
    <name type="scientific">Pseudomonas aeruginosa (strain ATCC 15692 / DSM 22644 / CIP 104116 / JCM 14847 / LMG 12228 / 1C / PRS 101 / PAO1)</name>
    <dbReference type="NCBI Taxonomy" id="208964"/>
    <lineage>
        <taxon>Bacteria</taxon>
        <taxon>Pseudomonadati</taxon>
        <taxon>Pseudomonadota</taxon>
        <taxon>Gammaproteobacteria</taxon>
        <taxon>Pseudomonadales</taxon>
        <taxon>Pseudomonadaceae</taxon>
        <taxon>Pseudomonas</taxon>
    </lineage>
</organism>
<protein>
    <recommendedName>
        <fullName>Putative esterase PA1618</fullName>
        <ecNumber>3.1.2.-</ecNumber>
    </recommendedName>
</protein>
<reference key="1">
    <citation type="journal article" date="2000" name="Nature">
        <title>Complete genome sequence of Pseudomonas aeruginosa PAO1, an opportunistic pathogen.</title>
        <authorList>
            <person name="Stover C.K."/>
            <person name="Pham X.-Q.T."/>
            <person name="Erwin A.L."/>
            <person name="Mizoguchi S.D."/>
            <person name="Warrener P."/>
            <person name="Hickey M.J."/>
            <person name="Brinkman F.S.L."/>
            <person name="Hufnagle W.O."/>
            <person name="Kowalik D.J."/>
            <person name="Lagrou M."/>
            <person name="Garber R.L."/>
            <person name="Goltry L."/>
            <person name="Tolentino E."/>
            <person name="Westbrock-Wadman S."/>
            <person name="Yuan Y."/>
            <person name="Brody L.L."/>
            <person name="Coulter S.N."/>
            <person name="Folger K.R."/>
            <person name="Kas A."/>
            <person name="Larbig K."/>
            <person name="Lim R.M."/>
            <person name="Smith K.A."/>
            <person name="Spencer D.H."/>
            <person name="Wong G.K.-S."/>
            <person name="Wu Z."/>
            <person name="Paulsen I.T."/>
            <person name="Reizer J."/>
            <person name="Saier M.H. Jr."/>
            <person name="Hancock R.E.W."/>
            <person name="Lory S."/>
            <person name="Olson M.V."/>
        </authorList>
    </citation>
    <scope>NUCLEOTIDE SEQUENCE [LARGE SCALE GENOMIC DNA]</scope>
    <source>
        <strain>ATCC 15692 / DSM 22644 / CIP 104116 / JCM 14847 / LMG 12228 / 1C / PRS 101 / PAO1</strain>
    </source>
</reference>
<name>Y1618_PSEAE</name>
<feature type="chain" id="PRO_0000156686" description="Putative esterase PA1618">
    <location>
        <begin position="1"/>
        <end position="145"/>
    </location>
</feature>
<feature type="helix" evidence="2">
    <location>
        <begin position="10"/>
        <end position="15"/>
    </location>
</feature>
<feature type="turn" evidence="2">
    <location>
        <begin position="16"/>
        <end position="19"/>
    </location>
</feature>
<feature type="helix" evidence="2">
    <location>
        <begin position="21"/>
        <end position="25"/>
    </location>
</feature>
<feature type="strand" evidence="2">
    <location>
        <begin position="28"/>
        <end position="32"/>
    </location>
</feature>
<feature type="strand" evidence="2">
    <location>
        <begin position="34"/>
        <end position="42"/>
    </location>
</feature>
<feature type="turn" evidence="2">
    <location>
        <begin position="45"/>
        <end position="47"/>
    </location>
</feature>
<feature type="strand" evidence="2">
    <location>
        <begin position="52"/>
        <end position="54"/>
    </location>
</feature>
<feature type="helix" evidence="2">
    <location>
        <begin position="56"/>
        <end position="72"/>
    </location>
</feature>
<feature type="turn" evidence="2">
    <location>
        <begin position="77"/>
        <end position="79"/>
    </location>
</feature>
<feature type="strand" evidence="2">
    <location>
        <begin position="80"/>
        <end position="91"/>
    </location>
</feature>
<feature type="strand" evidence="2">
    <location>
        <begin position="97"/>
        <end position="109"/>
    </location>
</feature>
<feature type="strand" evidence="2">
    <location>
        <begin position="111"/>
        <end position="121"/>
    </location>
</feature>
<feature type="strand" evidence="2">
    <location>
        <begin position="127"/>
        <end position="139"/>
    </location>
</feature>
<comment type="similarity">
    <text evidence="1">Belongs to the thioesterase PaaI family.</text>
</comment>
<evidence type="ECO:0000305" key="1"/>
<evidence type="ECO:0007829" key="2">
    <source>
        <dbReference type="PDB" id="4QD8"/>
    </source>
</evidence>
<keyword id="KW-0002">3D-structure</keyword>
<keyword id="KW-0378">Hydrolase</keyword>
<keyword id="KW-1185">Reference proteome</keyword>
<sequence>MSLWRQTPDLEQLNASQKNSIGDLLGIRFEAFDDESLTASMPVDSRTHQPFGLLHGGASVVLAESLGSMASYLCVDTSQYYCVGLEVNANHLRGLRSGRVTAVARAIHLGRTTHVWDIRLSGDDGKPSCIARLTMAVVPLAGRAG</sequence>
<proteinExistence type="evidence at protein level"/>
<accession>Q9I3A4</accession>
<dbReference type="EC" id="3.1.2.-"/>
<dbReference type="EMBL" id="AE004091">
    <property type="protein sequence ID" value="AAG05007.1"/>
    <property type="molecule type" value="Genomic_DNA"/>
</dbReference>
<dbReference type="PIR" id="D83444">
    <property type="entry name" value="D83444"/>
</dbReference>
<dbReference type="RefSeq" id="NP_250309.1">
    <property type="nucleotide sequence ID" value="NC_002516.2"/>
</dbReference>
<dbReference type="RefSeq" id="WP_003087490.1">
    <property type="nucleotide sequence ID" value="NZ_QZGE01000003.1"/>
</dbReference>
<dbReference type="PDB" id="4QD7">
    <property type="method" value="X-ray"/>
    <property type="resolution" value="1.76 A"/>
    <property type="chains" value="A/B/C/D/E/F=2-144"/>
</dbReference>
<dbReference type="PDB" id="4QD8">
    <property type="method" value="X-ray"/>
    <property type="resolution" value="1.62 A"/>
    <property type="chains" value="A/B/C/D/E/F=1-144"/>
</dbReference>
<dbReference type="PDB" id="4QD9">
    <property type="method" value="X-ray"/>
    <property type="resolution" value="1.77 A"/>
    <property type="chains" value="A/B/C/D/E/F=1-144"/>
</dbReference>
<dbReference type="PDB" id="4QDA">
    <property type="method" value="X-ray"/>
    <property type="resolution" value="2.30 A"/>
    <property type="chains" value="A/B/C/D/E/F=1-144"/>
</dbReference>
<dbReference type="PDB" id="4QDB">
    <property type="method" value="X-ray"/>
    <property type="resolution" value="2.02 A"/>
    <property type="chains" value="A/B/C/D/E/F=1-144"/>
</dbReference>
<dbReference type="PDBsum" id="4QD7"/>
<dbReference type="PDBsum" id="4QD8"/>
<dbReference type="PDBsum" id="4QD9"/>
<dbReference type="PDBsum" id="4QDA"/>
<dbReference type="PDBsum" id="4QDB"/>
<dbReference type="SMR" id="Q9I3A4"/>
<dbReference type="FunCoup" id="Q9I3A4">
    <property type="interactions" value="263"/>
</dbReference>
<dbReference type="STRING" id="208964.PA1618"/>
<dbReference type="PaxDb" id="208964-PA1618"/>
<dbReference type="GeneID" id="881899"/>
<dbReference type="KEGG" id="pae:PA1618"/>
<dbReference type="PATRIC" id="fig|208964.12.peg.1678"/>
<dbReference type="PseudoCAP" id="PA1618"/>
<dbReference type="HOGENOM" id="CLU_089876_13_1_6"/>
<dbReference type="InParanoid" id="Q9I3A4"/>
<dbReference type="OrthoDB" id="9798208at2"/>
<dbReference type="PhylomeDB" id="Q9I3A4"/>
<dbReference type="BioCyc" id="PAER208964:G1FZ6-1648-MONOMER"/>
<dbReference type="EvolutionaryTrace" id="Q9I3A4"/>
<dbReference type="Proteomes" id="UP000002438">
    <property type="component" value="Chromosome"/>
</dbReference>
<dbReference type="GO" id="GO:0005829">
    <property type="term" value="C:cytosol"/>
    <property type="evidence" value="ECO:0000318"/>
    <property type="project" value="GO_Central"/>
</dbReference>
<dbReference type="GO" id="GO:0061522">
    <property type="term" value="F:1,4-dihydroxy-2-naphthoyl-CoA thioesterase activity"/>
    <property type="evidence" value="ECO:0000318"/>
    <property type="project" value="GO_Central"/>
</dbReference>
<dbReference type="CDD" id="cd03443">
    <property type="entry name" value="PaaI_thioesterase"/>
    <property type="match status" value="1"/>
</dbReference>
<dbReference type="Gene3D" id="3.10.129.10">
    <property type="entry name" value="Hotdog Thioesterase"/>
    <property type="match status" value="1"/>
</dbReference>
<dbReference type="InterPro" id="IPR029069">
    <property type="entry name" value="HotDog_dom_sf"/>
</dbReference>
<dbReference type="InterPro" id="IPR003736">
    <property type="entry name" value="PAAI_dom"/>
</dbReference>
<dbReference type="InterPro" id="IPR006683">
    <property type="entry name" value="Thioestr_dom"/>
</dbReference>
<dbReference type="NCBIfam" id="TIGR00369">
    <property type="entry name" value="unchar_dom_1"/>
    <property type="match status" value="1"/>
</dbReference>
<dbReference type="PANTHER" id="PTHR43240">
    <property type="entry name" value="1,4-DIHYDROXY-2-NAPHTHOYL-COA THIOESTERASE 1"/>
    <property type="match status" value="1"/>
</dbReference>
<dbReference type="PANTHER" id="PTHR43240:SF5">
    <property type="entry name" value="1,4-DIHYDROXY-2-NAPHTHOYL-COA THIOESTERASE 1"/>
    <property type="match status" value="1"/>
</dbReference>
<dbReference type="Pfam" id="PF03061">
    <property type="entry name" value="4HBT"/>
    <property type="match status" value="1"/>
</dbReference>
<dbReference type="SUPFAM" id="SSF54637">
    <property type="entry name" value="Thioesterase/thiol ester dehydrase-isomerase"/>
    <property type="match status" value="1"/>
</dbReference>